<reference key="1">
    <citation type="journal article" date="2006" name="Nat. Genet.">
        <title>The multidrug-resistant human pathogen Clostridium difficile has a highly mobile, mosaic genome.</title>
        <authorList>
            <person name="Sebaihia M."/>
            <person name="Wren B.W."/>
            <person name="Mullany P."/>
            <person name="Fairweather N.F."/>
            <person name="Minton N."/>
            <person name="Stabler R."/>
            <person name="Thomson N.R."/>
            <person name="Roberts A.P."/>
            <person name="Cerdeno-Tarraga A.M."/>
            <person name="Wang H."/>
            <person name="Holden M.T.G."/>
            <person name="Wright A."/>
            <person name="Churcher C."/>
            <person name="Quail M.A."/>
            <person name="Baker S."/>
            <person name="Bason N."/>
            <person name="Brooks K."/>
            <person name="Chillingworth T."/>
            <person name="Cronin A."/>
            <person name="Davis P."/>
            <person name="Dowd L."/>
            <person name="Fraser A."/>
            <person name="Feltwell T."/>
            <person name="Hance Z."/>
            <person name="Holroyd S."/>
            <person name="Jagels K."/>
            <person name="Moule S."/>
            <person name="Mungall K."/>
            <person name="Price C."/>
            <person name="Rabbinowitsch E."/>
            <person name="Sharp S."/>
            <person name="Simmonds M."/>
            <person name="Stevens K."/>
            <person name="Unwin L."/>
            <person name="Whithead S."/>
            <person name="Dupuy B."/>
            <person name="Dougan G."/>
            <person name="Barrell B."/>
            <person name="Parkhill J."/>
        </authorList>
    </citation>
    <scope>NUCLEOTIDE SEQUENCE [LARGE SCALE GENOMIC DNA]</scope>
    <source>
        <strain>630</strain>
    </source>
</reference>
<evidence type="ECO:0000255" key="1">
    <source>
        <dbReference type="HAMAP-Rule" id="MF_00531"/>
    </source>
</evidence>
<evidence type="ECO:0000305" key="2"/>
<dbReference type="EMBL" id="AM180355">
    <property type="protein sequence ID" value="CAJ66892.1"/>
    <property type="molecule type" value="Genomic_DNA"/>
</dbReference>
<dbReference type="RefSeq" id="WP_003421166.1">
    <property type="nucleotide sequence ID" value="NZ_JAUPES010000043.1"/>
</dbReference>
<dbReference type="RefSeq" id="YP_001086541.1">
    <property type="nucleotide sequence ID" value="NC_009089.1"/>
</dbReference>
<dbReference type="SMR" id="Q18CG2"/>
<dbReference type="STRING" id="272563.CD630_00770"/>
<dbReference type="EnsemblBacteria" id="CAJ66892">
    <property type="protein sequence ID" value="CAJ66892"/>
    <property type="gene ID" value="CD630_00770"/>
</dbReference>
<dbReference type="GeneID" id="66352575"/>
<dbReference type="KEGG" id="cdf:CD630_00770"/>
<dbReference type="KEGG" id="pdc:CDIF630_00143"/>
<dbReference type="PATRIC" id="fig|272563.120.peg.83"/>
<dbReference type="eggNOG" id="COG0185">
    <property type="taxonomic scope" value="Bacteria"/>
</dbReference>
<dbReference type="OrthoDB" id="9797833at2"/>
<dbReference type="PhylomeDB" id="Q18CG2"/>
<dbReference type="BioCyc" id="PDIF272563:G12WB-131-MONOMER"/>
<dbReference type="Proteomes" id="UP000001978">
    <property type="component" value="Chromosome"/>
</dbReference>
<dbReference type="GO" id="GO:0005737">
    <property type="term" value="C:cytoplasm"/>
    <property type="evidence" value="ECO:0007669"/>
    <property type="project" value="UniProtKB-ARBA"/>
</dbReference>
<dbReference type="GO" id="GO:0015935">
    <property type="term" value="C:small ribosomal subunit"/>
    <property type="evidence" value="ECO:0007669"/>
    <property type="project" value="InterPro"/>
</dbReference>
<dbReference type="GO" id="GO:0019843">
    <property type="term" value="F:rRNA binding"/>
    <property type="evidence" value="ECO:0007669"/>
    <property type="project" value="UniProtKB-UniRule"/>
</dbReference>
<dbReference type="GO" id="GO:0003735">
    <property type="term" value="F:structural constituent of ribosome"/>
    <property type="evidence" value="ECO:0007669"/>
    <property type="project" value="InterPro"/>
</dbReference>
<dbReference type="GO" id="GO:0000028">
    <property type="term" value="P:ribosomal small subunit assembly"/>
    <property type="evidence" value="ECO:0007669"/>
    <property type="project" value="TreeGrafter"/>
</dbReference>
<dbReference type="GO" id="GO:0006412">
    <property type="term" value="P:translation"/>
    <property type="evidence" value="ECO:0007669"/>
    <property type="project" value="UniProtKB-UniRule"/>
</dbReference>
<dbReference type="FunFam" id="3.30.860.10:FF:000001">
    <property type="entry name" value="30S ribosomal protein S19"/>
    <property type="match status" value="1"/>
</dbReference>
<dbReference type="Gene3D" id="3.30.860.10">
    <property type="entry name" value="30s Ribosomal Protein S19, Chain A"/>
    <property type="match status" value="1"/>
</dbReference>
<dbReference type="HAMAP" id="MF_00531">
    <property type="entry name" value="Ribosomal_uS19"/>
    <property type="match status" value="1"/>
</dbReference>
<dbReference type="InterPro" id="IPR002222">
    <property type="entry name" value="Ribosomal_uS19"/>
</dbReference>
<dbReference type="InterPro" id="IPR005732">
    <property type="entry name" value="Ribosomal_uS19_bac-type"/>
</dbReference>
<dbReference type="InterPro" id="IPR020934">
    <property type="entry name" value="Ribosomal_uS19_CS"/>
</dbReference>
<dbReference type="InterPro" id="IPR023575">
    <property type="entry name" value="Ribosomal_uS19_SF"/>
</dbReference>
<dbReference type="NCBIfam" id="TIGR01050">
    <property type="entry name" value="rpsS_bact"/>
    <property type="match status" value="1"/>
</dbReference>
<dbReference type="PANTHER" id="PTHR11880">
    <property type="entry name" value="RIBOSOMAL PROTEIN S19P FAMILY MEMBER"/>
    <property type="match status" value="1"/>
</dbReference>
<dbReference type="PANTHER" id="PTHR11880:SF8">
    <property type="entry name" value="SMALL RIBOSOMAL SUBUNIT PROTEIN US19M"/>
    <property type="match status" value="1"/>
</dbReference>
<dbReference type="Pfam" id="PF00203">
    <property type="entry name" value="Ribosomal_S19"/>
    <property type="match status" value="1"/>
</dbReference>
<dbReference type="PIRSF" id="PIRSF002144">
    <property type="entry name" value="Ribosomal_S19"/>
    <property type="match status" value="1"/>
</dbReference>
<dbReference type="PRINTS" id="PR00975">
    <property type="entry name" value="RIBOSOMALS19"/>
</dbReference>
<dbReference type="SUPFAM" id="SSF54570">
    <property type="entry name" value="Ribosomal protein S19"/>
    <property type="match status" value="1"/>
</dbReference>
<dbReference type="PROSITE" id="PS00323">
    <property type="entry name" value="RIBOSOMAL_S19"/>
    <property type="match status" value="1"/>
</dbReference>
<feature type="chain" id="PRO_0000265347" description="Small ribosomal subunit protein uS19">
    <location>
        <begin position="1"/>
        <end position="93"/>
    </location>
</feature>
<protein>
    <recommendedName>
        <fullName evidence="1">Small ribosomal subunit protein uS19</fullName>
    </recommendedName>
    <alternativeName>
        <fullName evidence="2">30S ribosomal protein S19</fullName>
    </alternativeName>
</protein>
<name>RS19_CLOD6</name>
<organism>
    <name type="scientific">Clostridioides difficile (strain 630)</name>
    <name type="common">Peptoclostridium difficile</name>
    <dbReference type="NCBI Taxonomy" id="272563"/>
    <lineage>
        <taxon>Bacteria</taxon>
        <taxon>Bacillati</taxon>
        <taxon>Bacillota</taxon>
        <taxon>Clostridia</taxon>
        <taxon>Peptostreptococcales</taxon>
        <taxon>Peptostreptococcaceae</taxon>
        <taxon>Clostridioides</taxon>
    </lineage>
</organism>
<sequence>MSRSTKKGPFVHARLLKKIEAMNASGNKEVIKTWSRSSTVFPQMVENTIAVHDGRKHVPVYITEDMVGHKLGEFVPTRTFKGHKDDEKSNKRK</sequence>
<keyword id="KW-1185">Reference proteome</keyword>
<keyword id="KW-0687">Ribonucleoprotein</keyword>
<keyword id="KW-0689">Ribosomal protein</keyword>
<keyword id="KW-0694">RNA-binding</keyword>
<keyword id="KW-0699">rRNA-binding</keyword>
<comment type="function">
    <text evidence="1">Protein S19 forms a complex with S13 that binds strongly to the 16S ribosomal RNA.</text>
</comment>
<comment type="similarity">
    <text evidence="1">Belongs to the universal ribosomal protein uS19 family.</text>
</comment>
<gene>
    <name evidence="1" type="primary">rpsS</name>
    <name type="ordered locus">CD630_00770</name>
</gene>
<accession>Q18CG2</accession>
<proteinExistence type="inferred from homology"/>